<name>MPDC_MYCAO</name>
<sequence length="504" mass="53848">MTRTLSADADTRTATPPLMYVNGEWLPARSGATFPTIEPSTGRPITEIPRGDSSDVDAAVKAAADVAVEWQFTDAITRAALLRRLAELVAENAEELARIESLDSGHYLAKARELVTAIPLWLEYWAGAADKVGGRTIAVPGNKLSFTLLEPLGVTAHIIPWNYPLLILARSIAPALALGNTCVVKPAEDTSLSALKFAELVHAAGFPAGVFNVVTGYGSEAGAALAAHPEVRGITFTGSTETGREIARLGGQHIAQVNLELGGKSPLVVFPDAPLEDAVEVAVQGFCSRAGQVCVAGSRLFLHEDIADRFLEMLVSRLETVTVGDPFDGATQMGPLASKKHYDRVREYIEVGKQEATLLYGGGRPTDTPDDGFFVEPTVFVDVATDARIAREEIFGPVTAVMRWSSVDDLIATINDSEFGLFAVLWCRDITSALDTAKRLQVGSVMINDWFGELPMTPHGGHKQSGTGREEGLEAVHGYTQVKHIGINLEPSPAKSADWAGAPL</sequence>
<evidence type="ECO:0000250" key="1">
    <source>
        <dbReference type="UniProtKB" id="P25526"/>
    </source>
</evidence>
<evidence type="ECO:0000269" key="2">
    <source>
    </source>
</evidence>
<evidence type="ECO:0000303" key="3">
    <source>
    </source>
</evidence>
<evidence type="ECO:0000305" key="4"/>
<accession>Q3YAT5</accession>
<dbReference type="EC" id="1.2.1.98" evidence="2"/>
<dbReference type="EMBL" id="DQ147773">
    <property type="protein sequence ID" value="AAZ78235.1"/>
    <property type="molecule type" value="Genomic_DNA"/>
</dbReference>
<dbReference type="RefSeq" id="WP_301161307.1">
    <property type="nucleotide sequence ID" value="NZ_JAUHTC010000021.1"/>
</dbReference>
<dbReference type="SMR" id="Q3YAT5"/>
<dbReference type="KEGG" id="ag:AAZ78235"/>
<dbReference type="BioCyc" id="MetaCyc:MONOMER-19854"/>
<dbReference type="BRENDA" id="1.2.1.98">
    <property type="organism ID" value="14567"/>
</dbReference>
<dbReference type="GO" id="GO:0005737">
    <property type="term" value="C:cytoplasm"/>
    <property type="evidence" value="ECO:0007669"/>
    <property type="project" value="UniProtKB-SubCell"/>
</dbReference>
<dbReference type="GO" id="GO:0016620">
    <property type="term" value="F:oxidoreductase activity, acting on the aldehyde or oxo group of donors, NAD or NADP as acceptor"/>
    <property type="evidence" value="ECO:0007669"/>
    <property type="project" value="InterPro"/>
</dbReference>
<dbReference type="FunFam" id="3.40.309.10:FF:000012">
    <property type="entry name" value="Betaine aldehyde dehydrogenase"/>
    <property type="match status" value="1"/>
</dbReference>
<dbReference type="FunFam" id="3.40.605.10:FF:000007">
    <property type="entry name" value="NAD/NADP-dependent betaine aldehyde dehydrogenase"/>
    <property type="match status" value="1"/>
</dbReference>
<dbReference type="Gene3D" id="3.40.605.10">
    <property type="entry name" value="Aldehyde Dehydrogenase, Chain A, domain 1"/>
    <property type="match status" value="1"/>
</dbReference>
<dbReference type="Gene3D" id="3.40.309.10">
    <property type="entry name" value="Aldehyde Dehydrogenase, Chain A, domain 2"/>
    <property type="match status" value="1"/>
</dbReference>
<dbReference type="InterPro" id="IPR016161">
    <property type="entry name" value="Ald_DH/histidinol_DH"/>
</dbReference>
<dbReference type="InterPro" id="IPR016163">
    <property type="entry name" value="Ald_DH_C"/>
</dbReference>
<dbReference type="InterPro" id="IPR029510">
    <property type="entry name" value="Ald_DH_CS_GLU"/>
</dbReference>
<dbReference type="InterPro" id="IPR016162">
    <property type="entry name" value="Ald_DH_N"/>
</dbReference>
<dbReference type="InterPro" id="IPR015590">
    <property type="entry name" value="Aldehyde_DH_dom"/>
</dbReference>
<dbReference type="PANTHER" id="PTHR11699">
    <property type="entry name" value="ALDEHYDE DEHYDROGENASE-RELATED"/>
    <property type="match status" value="1"/>
</dbReference>
<dbReference type="Pfam" id="PF00171">
    <property type="entry name" value="Aldedh"/>
    <property type="match status" value="1"/>
</dbReference>
<dbReference type="SUPFAM" id="SSF53720">
    <property type="entry name" value="ALDH-like"/>
    <property type="match status" value="1"/>
</dbReference>
<dbReference type="PROSITE" id="PS00687">
    <property type="entry name" value="ALDEHYDE_DEHYDR_GLU"/>
    <property type="match status" value="1"/>
</dbReference>
<proteinExistence type="evidence at protein level"/>
<protein>
    <recommendedName>
        <fullName evidence="3">Hydroxyisobutyraldehyde dehydrogenase</fullName>
        <ecNumber evidence="2">1.2.1.98</ecNumber>
    </recommendedName>
</protein>
<reference key="1">
    <citation type="journal article" date="2006" name="Microbiology">
        <title>Genes involved in the methyl tert-butyl ether (MTBE) metabolic pathway of Mycobacterium austroafricanum IFP 2012.</title>
        <authorList>
            <person name="Lopes Ferreira N."/>
            <person name="Labbe D."/>
            <person name="Monot F."/>
            <person name="Fayolle-Guichard F."/>
            <person name="Greer C.W."/>
        </authorList>
    </citation>
    <scope>NUCLEOTIDE SEQUENCE [GENOMIC DNA]</scope>
    <scope>FUNCTION</scope>
    <scope>CATALYTIC ACTIVITY</scope>
    <scope>SUBCELLULAR LOCATION</scope>
    <scope>INDUCTION</scope>
    <source>
        <strain>IFP 2012</strain>
    </source>
</reference>
<comment type="function">
    <text evidence="2">Involved in the degradation of methyl tert-butyl ether (MTBE). Catalyzes the conversion of hydroxyisobutyraldehyde to hydroxyisobutyric acid (HIBA).</text>
</comment>
<comment type="catalytic activity">
    <reaction evidence="2">
        <text>2-hydroxy-2-methylpropanal + NAD(+) + H2O = 2-hydroxy-2-methylpropanoate + NADH + 2 H(+)</text>
        <dbReference type="Rhea" id="RHEA:49616"/>
        <dbReference type="ChEBI" id="CHEBI:15377"/>
        <dbReference type="ChEBI" id="CHEBI:15378"/>
        <dbReference type="ChEBI" id="CHEBI:19641"/>
        <dbReference type="ChEBI" id="CHEBI:57540"/>
        <dbReference type="ChEBI" id="CHEBI:57945"/>
        <dbReference type="ChEBI" id="CHEBI:131846"/>
        <dbReference type="EC" id="1.2.1.98"/>
    </reaction>
</comment>
<comment type="subcellular location">
    <subcellularLocation>
        <location evidence="2">Cytoplasm</location>
    </subcellularLocation>
</comment>
<comment type="induction">
    <text evidence="2">Induced in the presence of MTBE or tert-butyl alcohol (TBA).</text>
</comment>
<comment type="similarity">
    <text evidence="4">Belongs to the aldehyde dehydrogenase family.</text>
</comment>
<organism>
    <name type="scientific">Mycolicibacterium austroafricanum</name>
    <name type="common">Mycobacterium austroafricanum</name>
    <dbReference type="NCBI Taxonomy" id="39687"/>
    <lineage>
        <taxon>Bacteria</taxon>
        <taxon>Bacillati</taxon>
        <taxon>Actinomycetota</taxon>
        <taxon>Actinomycetes</taxon>
        <taxon>Mycobacteriales</taxon>
        <taxon>Mycobacteriaceae</taxon>
        <taxon>Mycolicibacterium</taxon>
    </lineage>
</organism>
<keyword id="KW-0963">Cytoplasm</keyword>
<keyword id="KW-0520">NAD</keyword>
<keyword id="KW-0560">Oxidoreductase</keyword>
<feature type="chain" id="PRO_0000447201" description="Hydroxyisobutyraldehyde dehydrogenase">
    <location>
        <begin position="1"/>
        <end position="504"/>
    </location>
</feature>
<feature type="active site" description="Proton acceptor" evidence="1">
    <location>
        <position position="260"/>
    </location>
</feature>
<feature type="active site" description="Nucleophile" evidence="1">
    <location>
        <position position="294"/>
    </location>
</feature>
<gene>
    <name evidence="3" type="primary">mpdC</name>
</gene>